<feature type="initiator methionine" description="Removed" evidence="1">
    <location>
        <position position="1"/>
    </location>
</feature>
<feature type="chain" id="PRO_0000052465" description="Globin">
    <location>
        <begin position="2"/>
        <end position="149"/>
    </location>
</feature>
<feature type="domain" description="Globin" evidence="2">
    <location>
        <begin position="2"/>
        <end position="149"/>
    </location>
</feature>
<feature type="binding site" description="proximal binding residue">
    <location>
        <position position="100"/>
    </location>
    <ligand>
        <name>heme</name>
        <dbReference type="ChEBI" id="CHEBI:30413"/>
    </ligand>
    <ligandPart>
        <name>Fe</name>
        <dbReference type="ChEBI" id="CHEBI:18248"/>
    </ligandPart>
</feature>
<dbReference type="PIR" id="B58345">
    <property type="entry name" value="B58345"/>
</dbReference>
<dbReference type="SMR" id="P80722"/>
<dbReference type="GO" id="GO:0020037">
    <property type="term" value="F:heme binding"/>
    <property type="evidence" value="ECO:0007669"/>
    <property type="project" value="InterPro"/>
</dbReference>
<dbReference type="GO" id="GO:0005506">
    <property type="term" value="F:iron ion binding"/>
    <property type="evidence" value="ECO:0007669"/>
    <property type="project" value="InterPro"/>
</dbReference>
<dbReference type="GO" id="GO:0019825">
    <property type="term" value="F:oxygen binding"/>
    <property type="evidence" value="ECO:0007669"/>
    <property type="project" value="InterPro"/>
</dbReference>
<dbReference type="GO" id="GO:0005344">
    <property type="term" value="F:oxygen carrier activity"/>
    <property type="evidence" value="ECO:0007669"/>
    <property type="project" value="UniProtKB-KW"/>
</dbReference>
<dbReference type="CDD" id="cd01040">
    <property type="entry name" value="Mb-like"/>
    <property type="match status" value="1"/>
</dbReference>
<dbReference type="Gene3D" id="1.10.490.10">
    <property type="entry name" value="Globins"/>
    <property type="match status" value="1"/>
</dbReference>
<dbReference type="InterPro" id="IPR000971">
    <property type="entry name" value="Globin"/>
</dbReference>
<dbReference type="InterPro" id="IPR009050">
    <property type="entry name" value="Globin-like_sf"/>
</dbReference>
<dbReference type="InterPro" id="IPR012292">
    <property type="entry name" value="Globin/Proto"/>
</dbReference>
<dbReference type="InterPro" id="IPR011406">
    <property type="entry name" value="Globin_trematode"/>
</dbReference>
<dbReference type="InterPro" id="IPR044399">
    <property type="entry name" value="Mb-like_M"/>
</dbReference>
<dbReference type="Pfam" id="PF00042">
    <property type="entry name" value="Globin"/>
    <property type="match status" value="1"/>
</dbReference>
<dbReference type="PIRSF" id="PIRSF036488">
    <property type="entry name" value="Myoglobin_tremt"/>
    <property type="match status" value="1"/>
</dbReference>
<dbReference type="SUPFAM" id="SSF46458">
    <property type="entry name" value="Globin-like"/>
    <property type="match status" value="1"/>
</dbReference>
<dbReference type="PROSITE" id="PS01033">
    <property type="entry name" value="GLOBIN"/>
    <property type="match status" value="1"/>
</dbReference>
<organism>
    <name type="scientific">Isoparorchis hypselobagri</name>
    <name type="common">Giant trematode</name>
    <dbReference type="NCBI Taxonomy" id="36663"/>
    <lineage>
        <taxon>Eukaryota</taxon>
        <taxon>Metazoa</taxon>
        <taxon>Spiralia</taxon>
        <taxon>Lophotrochozoa</taxon>
        <taxon>Platyhelminthes</taxon>
        <taxon>Trematoda</taxon>
        <taxon>Digenea</taxon>
        <taxon>Azygiida</taxon>
        <taxon>Isoparorchiidae</taxon>
        <taxon>Isoparorchis</taxon>
    </lineage>
</organism>
<evidence type="ECO:0000250" key="1"/>
<evidence type="ECO:0000255" key="2">
    <source>
        <dbReference type="PROSITE-ProRule" id="PRU00238"/>
    </source>
</evidence>
<evidence type="ECO:0000305" key="3"/>
<proteinExistence type="evidence at protein level"/>
<name>GLB_ISOHY</name>
<accession>P80722</accession>
<comment type="function">
    <text>Oxygen binding protein.</text>
</comment>
<comment type="subunit">
    <text>Monomer.</text>
</comment>
<comment type="miscellaneous">
    <text>This globin lacks one of the heme-binding histidine residues found in most other globins (replaced by tyrosine) but is functional despite this change.</text>
</comment>
<comment type="similarity">
    <text evidence="3">Belongs to the globin family.</text>
</comment>
<reference key="1">
    <citation type="journal article" date="1997" name="J. Biol. Chem.">
        <title>Trematode myoglobins, functional molecules with a distal tyrosine.</title>
        <authorList>
            <person name="Rashid A.R."/>
            <person name="van Hauwaert M.-L."/>
            <person name="Haque M."/>
            <person name="Siddiqi A.H."/>
            <person name="Lasters I."/>
            <person name="de Maeyer M."/>
            <person name="Griffon N."/>
            <person name="Marden M.C."/>
            <person name="Dewilde S."/>
            <person name="Clauwaert J."/>
            <person name="Vinogradov S.N."/>
            <person name="Moens L."/>
        </authorList>
    </citation>
    <scope>PROTEIN SEQUENCE OF 2-149</scope>
</reference>
<protein>
    <recommendedName>
        <fullName>Globin</fullName>
    </recommendedName>
    <alternativeName>
        <fullName>Myoglobin</fullName>
    </alternativeName>
</protein>
<keyword id="KW-0903">Direct protein sequencing</keyword>
<keyword id="KW-0349">Heme</keyword>
<keyword id="KW-0408">Iron</keyword>
<keyword id="KW-0479">Metal-binding</keyword>
<keyword id="KW-0561">Oxygen transport</keyword>
<keyword id="KW-0813">Transport</keyword>
<sequence length="149" mass="16648">MVLTKDEFDSLLHELDPKIDTEEHRMELGLGAYTELFAAHPEYIKKFSRLQEATPANVMAQDGAKYYAKTLINDLVELLKASTDEATLNTAIARTATKDHKPRNVSGAEFQTGEPIFIKYFSHVLTTPANQAFMEKLLTKIFTGVAGQL</sequence>